<gene>
    <name type="primary">NOP9</name>
    <name type="ORF">Lema_P094150.1</name>
</gene>
<feature type="chain" id="PRO_0000407816" description="Nucleolar protein 9">
    <location>
        <begin position="1"/>
        <end position="712"/>
    </location>
</feature>
<feature type="repeat" description="Pumilio 1">
    <location>
        <begin position="107"/>
        <end position="142"/>
    </location>
</feature>
<feature type="repeat" description="Pumilio 2">
    <location>
        <begin position="143"/>
        <end position="178"/>
    </location>
</feature>
<feature type="repeat" description="Pumilio 3">
    <location>
        <begin position="207"/>
        <end position="246"/>
    </location>
</feature>
<feature type="repeat" description="Pumilio 4">
    <location>
        <begin position="345"/>
        <end position="380"/>
    </location>
</feature>
<feature type="repeat" description="Pumilio 5">
    <location>
        <begin position="381"/>
        <end position="421"/>
    </location>
</feature>
<feature type="repeat" description="Pumilio 6">
    <location>
        <begin position="519"/>
        <end position="557"/>
    </location>
</feature>
<feature type="repeat" description="Pumilio 7">
    <location>
        <begin position="558"/>
        <end position="595"/>
    </location>
</feature>
<feature type="region of interest" description="Disordered" evidence="2">
    <location>
        <begin position="1"/>
        <end position="40"/>
    </location>
</feature>
<feature type="region of interest" description="Disordered" evidence="2">
    <location>
        <begin position="640"/>
        <end position="712"/>
    </location>
</feature>
<feature type="compositionally biased region" description="Basic and acidic residues" evidence="2">
    <location>
        <begin position="10"/>
        <end position="35"/>
    </location>
</feature>
<feature type="compositionally biased region" description="Polar residues" evidence="2">
    <location>
        <begin position="640"/>
        <end position="658"/>
    </location>
</feature>
<feature type="compositionally biased region" description="Basic and acidic residues" evidence="2">
    <location>
        <begin position="682"/>
        <end position="695"/>
    </location>
</feature>
<organism>
    <name type="scientific">Leptosphaeria maculans (strain JN3 / isolate v23.1.3 / race Av1-4-5-6-7-8)</name>
    <name type="common">Blackleg fungus</name>
    <name type="synonym">Phoma lingam</name>
    <dbReference type="NCBI Taxonomy" id="985895"/>
    <lineage>
        <taxon>Eukaryota</taxon>
        <taxon>Fungi</taxon>
        <taxon>Dikarya</taxon>
        <taxon>Ascomycota</taxon>
        <taxon>Pezizomycotina</taxon>
        <taxon>Dothideomycetes</taxon>
        <taxon>Pleosporomycetidae</taxon>
        <taxon>Pleosporales</taxon>
        <taxon>Pleosporineae</taxon>
        <taxon>Leptosphaeriaceae</taxon>
        <taxon>Plenodomus</taxon>
        <taxon>Plenodomus lingam/Leptosphaeria maculans species complex</taxon>
    </lineage>
</organism>
<evidence type="ECO:0000250" key="1"/>
<evidence type="ECO:0000256" key="2">
    <source>
        <dbReference type="SAM" id="MobiDB-lite"/>
    </source>
</evidence>
<evidence type="ECO:0000305" key="3"/>
<proteinExistence type="inferred from homology"/>
<name>NOP9_LEPMJ</name>
<sequence>MPKEHKKRGRRDEQKKRKRDADDDATAKRHKKDDVDAQFQPLDAAHQLHHGGVGEDGELTRPGEVQFYGMLDEDEQEFFKNVDDQLDRNEFASPDERAQWLKNVFKEAEGKELKIANSQSCSRVLERLILLSTPGQLKNIFEKFNGHFLNLVQHRFASHCCEALFLQAAPVVTQELANPERLQTPPSSNPDHIFVSMENLFLFTLAELQEHLGFLMTDRFASHVLRVLLVVLSGSPLERQSKSVLQSKRKEKVDVTGAEKGREWLAEKRAVPQSFLEALEKVINNCVSGMEPHYLRSLATHPLGNPTLQLLLKLELSHFGKSRAKDEKSLIHRLLPDDPIAEGTDSAAFINGLVYDPIGSRLLETIIENAPGKLFKAIYGEFFKERMGSLSRNEIAGYVAGKILERLGKDDLEEAMRQIVDQIPSLVERNRTAIIKTLIERCVARGVDTASIKAQLETAYGGSNGFEVIRILKLSEEDGKPGGEHKQQSPEKLHGSLLAQTMMSVEGPLGNLVFDSLANLSPELSVQLARDPPASRTLQAALTSPNASVIFRRKMIQQFYGKVGELALDPSASRVIDAIWNGTAGLAFIRERIAEELAENEGSLRESYVGRAVWRNWRMDLYKRKRNDWVKQSRYTAGNDGFQSFPESDGDASNSQTRAGKHMTAIELARQKHAAAKAAAQGKKDMKKEKTERHGTGSNSSAVGTKGRVVAQ</sequence>
<comment type="function">
    <text evidence="1">RNA-binding nucleolar protein required for pre-rRNA processing. Involved in production of 18S rRNA and assembly of small ribosomal subunit (By similarity).</text>
</comment>
<comment type="subcellular location">
    <subcellularLocation>
        <location evidence="1">Nucleus</location>
        <location evidence="1">Nucleolus</location>
    </subcellularLocation>
</comment>
<comment type="similarity">
    <text evidence="3">Belongs to the NOP9 family.</text>
</comment>
<keyword id="KW-0539">Nucleus</keyword>
<keyword id="KW-1185">Reference proteome</keyword>
<keyword id="KW-0677">Repeat</keyword>
<keyword id="KW-0690">Ribosome biogenesis</keyword>
<keyword id="KW-0698">rRNA processing</keyword>
<reference key="1">
    <citation type="journal article" date="2011" name="Nat. Commun.">
        <title>Effector diversification within compartments of the Leptosphaeria maculans genome affected by Repeat-Induced Point mutations.</title>
        <authorList>
            <person name="Rouxel T."/>
            <person name="Grandaubert J."/>
            <person name="Hane J.K."/>
            <person name="Hoede C."/>
            <person name="van de Wouw A.P."/>
            <person name="Couloux A."/>
            <person name="Dominguez V."/>
            <person name="Anthouard V."/>
            <person name="Bally P."/>
            <person name="Bourras S."/>
            <person name="Cozijnsen A.J."/>
            <person name="Ciuffetti L.M."/>
            <person name="Degrave A."/>
            <person name="Dilmaghani A."/>
            <person name="Duret L."/>
            <person name="Fudal I."/>
            <person name="Goodwin S.B."/>
            <person name="Gout L."/>
            <person name="Glaser N."/>
            <person name="Linglin J."/>
            <person name="Kema G.H.J."/>
            <person name="Lapalu N."/>
            <person name="Lawrence C.B."/>
            <person name="May K."/>
            <person name="Meyer M."/>
            <person name="Ollivier B."/>
            <person name="Poulain J."/>
            <person name="Schoch C.L."/>
            <person name="Simon A."/>
            <person name="Spatafora J.W."/>
            <person name="Stachowiak A."/>
            <person name="Turgeon B.G."/>
            <person name="Tyler B.M."/>
            <person name="Vincent D."/>
            <person name="Weissenbach J."/>
            <person name="Amselem J."/>
            <person name="Quesneville H."/>
            <person name="Oliver R.P."/>
            <person name="Wincker P."/>
            <person name="Balesdent M.-H."/>
            <person name="Howlett B.J."/>
        </authorList>
    </citation>
    <scope>NUCLEOTIDE SEQUENCE [LARGE SCALE GENOMIC DNA]</scope>
    <source>
        <strain>JN3 / isolate v23.1.3 / race Av1-4-5-6-7-8</strain>
    </source>
</reference>
<protein>
    <recommendedName>
        <fullName>Nucleolar protein 9</fullName>
    </recommendedName>
    <alternativeName>
        <fullName>Pumilio domain-containing protein NOP9</fullName>
    </alternativeName>
</protein>
<dbReference type="EMBL" id="FP929133">
    <property type="protein sequence ID" value="CBX98006.1"/>
    <property type="molecule type" value="Genomic_DNA"/>
</dbReference>
<dbReference type="RefSeq" id="XP_003841485.1">
    <property type="nucleotide sequence ID" value="XM_003841437.1"/>
</dbReference>
<dbReference type="SMR" id="E5A2Z3"/>
<dbReference type="FunCoup" id="E5A2Z3">
    <property type="interactions" value="839"/>
</dbReference>
<dbReference type="STRING" id="985895.E5A2Z3"/>
<dbReference type="EnsemblFungi" id="CBX98006">
    <property type="protein sequence ID" value="CBX98006"/>
    <property type="gene ID" value="LEMA_P094150.1"/>
</dbReference>
<dbReference type="GeneID" id="13286402"/>
<dbReference type="VEuPathDB" id="FungiDB:LEMA_P094150.1"/>
<dbReference type="eggNOG" id="KOG2188">
    <property type="taxonomic scope" value="Eukaryota"/>
</dbReference>
<dbReference type="HOGENOM" id="CLU_008720_1_1_1"/>
<dbReference type="InParanoid" id="E5A2Z3"/>
<dbReference type="OMA" id="HHLVRNF"/>
<dbReference type="OrthoDB" id="392571at2759"/>
<dbReference type="Proteomes" id="UP000002668">
    <property type="component" value="Genome"/>
</dbReference>
<dbReference type="GO" id="GO:0030686">
    <property type="term" value="C:90S preribosome"/>
    <property type="evidence" value="ECO:0007669"/>
    <property type="project" value="TreeGrafter"/>
</dbReference>
<dbReference type="GO" id="GO:0005730">
    <property type="term" value="C:nucleolus"/>
    <property type="evidence" value="ECO:0007669"/>
    <property type="project" value="UniProtKB-SubCell"/>
</dbReference>
<dbReference type="GO" id="GO:0030688">
    <property type="term" value="C:preribosome, small subunit precursor"/>
    <property type="evidence" value="ECO:0007669"/>
    <property type="project" value="TreeGrafter"/>
</dbReference>
<dbReference type="GO" id="GO:0003723">
    <property type="term" value="F:RNA binding"/>
    <property type="evidence" value="ECO:0007669"/>
    <property type="project" value="InterPro"/>
</dbReference>
<dbReference type="GO" id="GO:0000480">
    <property type="term" value="P:endonucleolytic cleavage in 5'-ETS of tricistronic rRNA transcript (SSU-rRNA, 5.8S rRNA, LSU-rRNA)"/>
    <property type="evidence" value="ECO:0007669"/>
    <property type="project" value="TreeGrafter"/>
</dbReference>
<dbReference type="GO" id="GO:0000447">
    <property type="term" value="P:endonucleolytic cleavage in ITS1 to separate SSU-rRNA from 5.8S rRNA and LSU-rRNA from tricistronic rRNA transcript (SSU-rRNA, 5.8S rRNA, LSU-rRNA)"/>
    <property type="evidence" value="ECO:0007669"/>
    <property type="project" value="TreeGrafter"/>
</dbReference>
<dbReference type="GO" id="GO:0000472">
    <property type="term" value="P:endonucleolytic cleavage to generate mature 5'-end of SSU-rRNA from (SSU-rRNA, 5.8S rRNA, LSU-rRNA)"/>
    <property type="evidence" value="ECO:0007669"/>
    <property type="project" value="TreeGrafter"/>
</dbReference>
<dbReference type="GO" id="GO:0000056">
    <property type="term" value="P:ribosomal small subunit export from nucleus"/>
    <property type="evidence" value="ECO:0007669"/>
    <property type="project" value="TreeGrafter"/>
</dbReference>
<dbReference type="Gene3D" id="1.25.10.10">
    <property type="entry name" value="Leucine-rich Repeat Variant"/>
    <property type="match status" value="2"/>
</dbReference>
<dbReference type="InterPro" id="IPR011989">
    <property type="entry name" value="ARM-like"/>
</dbReference>
<dbReference type="InterPro" id="IPR016024">
    <property type="entry name" value="ARM-type_fold"/>
</dbReference>
<dbReference type="InterPro" id="IPR040000">
    <property type="entry name" value="NOP9"/>
</dbReference>
<dbReference type="InterPro" id="IPR001313">
    <property type="entry name" value="Pumilio_RNA-bd_rpt"/>
</dbReference>
<dbReference type="PANTHER" id="PTHR13102">
    <property type="entry name" value="NUCLEOLAR PROTEIN 9"/>
    <property type="match status" value="1"/>
</dbReference>
<dbReference type="PANTHER" id="PTHR13102:SF0">
    <property type="entry name" value="NUCLEOLAR PROTEIN 9"/>
    <property type="match status" value="1"/>
</dbReference>
<dbReference type="Pfam" id="PF22493">
    <property type="entry name" value="PUF_NOP9"/>
    <property type="match status" value="1"/>
</dbReference>
<dbReference type="SMART" id="SM00025">
    <property type="entry name" value="Pumilio"/>
    <property type="match status" value="5"/>
</dbReference>
<dbReference type="SUPFAM" id="SSF48371">
    <property type="entry name" value="ARM repeat"/>
    <property type="match status" value="1"/>
</dbReference>
<accession>E5A2Z3</accession>